<comment type="function">
    <text evidence="1">Attaches a formyl group to the free amino group of methionyl-tRNA(fMet). The formyl group appears to play a dual role in the initiator identity of N-formylmethionyl-tRNA by promoting its recognition by IF2 and preventing the misappropriation of this tRNA by the elongation apparatus.</text>
</comment>
<comment type="catalytic activity">
    <reaction evidence="1">
        <text>L-methionyl-tRNA(fMet) + (6R)-10-formyltetrahydrofolate = N-formyl-L-methionyl-tRNA(fMet) + (6S)-5,6,7,8-tetrahydrofolate + H(+)</text>
        <dbReference type="Rhea" id="RHEA:24380"/>
        <dbReference type="Rhea" id="RHEA-COMP:9952"/>
        <dbReference type="Rhea" id="RHEA-COMP:9953"/>
        <dbReference type="ChEBI" id="CHEBI:15378"/>
        <dbReference type="ChEBI" id="CHEBI:57453"/>
        <dbReference type="ChEBI" id="CHEBI:78530"/>
        <dbReference type="ChEBI" id="CHEBI:78844"/>
        <dbReference type="ChEBI" id="CHEBI:195366"/>
        <dbReference type="EC" id="2.1.2.9"/>
    </reaction>
</comment>
<comment type="similarity">
    <text evidence="1">Belongs to the Fmt family.</text>
</comment>
<protein>
    <recommendedName>
        <fullName evidence="1">Methionyl-tRNA formyltransferase</fullName>
        <ecNumber evidence="1">2.1.2.9</ecNumber>
    </recommendedName>
</protein>
<proteinExistence type="inferred from homology"/>
<gene>
    <name evidence="1" type="primary">fmt</name>
    <name type="ordered locus">RB12854</name>
</gene>
<feature type="chain" id="PRO_0000083023" description="Methionyl-tRNA formyltransferase">
    <location>
        <begin position="1"/>
        <end position="335"/>
    </location>
</feature>
<feature type="region of interest" description="Disordered" evidence="2">
    <location>
        <begin position="203"/>
        <end position="222"/>
    </location>
</feature>
<feature type="binding site" evidence="1">
    <location>
        <begin position="122"/>
        <end position="125"/>
    </location>
    <ligand>
        <name>(6S)-5,6,7,8-tetrahydrofolate</name>
        <dbReference type="ChEBI" id="CHEBI:57453"/>
    </ligand>
</feature>
<evidence type="ECO:0000255" key="1">
    <source>
        <dbReference type="HAMAP-Rule" id="MF_00182"/>
    </source>
</evidence>
<evidence type="ECO:0000256" key="2">
    <source>
        <dbReference type="SAM" id="MobiDB-lite"/>
    </source>
</evidence>
<organism>
    <name type="scientific">Rhodopirellula baltica (strain DSM 10527 / NCIMB 13988 / SH1)</name>
    <dbReference type="NCBI Taxonomy" id="243090"/>
    <lineage>
        <taxon>Bacteria</taxon>
        <taxon>Pseudomonadati</taxon>
        <taxon>Planctomycetota</taxon>
        <taxon>Planctomycetia</taxon>
        <taxon>Pirellulales</taxon>
        <taxon>Pirellulaceae</taxon>
        <taxon>Rhodopirellula</taxon>
    </lineage>
</organism>
<keyword id="KW-0648">Protein biosynthesis</keyword>
<keyword id="KW-1185">Reference proteome</keyword>
<keyword id="KW-0808">Transferase</keyword>
<reference key="1">
    <citation type="journal article" date="2003" name="Proc. Natl. Acad. Sci. U.S.A.">
        <title>Complete genome sequence of the marine planctomycete Pirellula sp. strain 1.</title>
        <authorList>
            <person name="Gloeckner F.O."/>
            <person name="Kube M."/>
            <person name="Bauer M."/>
            <person name="Teeling H."/>
            <person name="Lombardot T."/>
            <person name="Ludwig W."/>
            <person name="Gade D."/>
            <person name="Beck A."/>
            <person name="Borzym K."/>
            <person name="Heitmann K."/>
            <person name="Rabus R."/>
            <person name="Schlesner H."/>
            <person name="Amann R."/>
            <person name="Reinhardt R."/>
        </authorList>
    </citation>
    <scope>NUCLEOTIDE SEQUENCE [LARGE SCALE GENOMIC DNA]</scope>
    <source>
        <strain>DSM 10527 / NCIMB 13988 / SH1</strain>
    </source>
</reference>
<accession>Q7UHZ6</accession>
<name>FMT_RHOBA</name>
<dbReference type="EC" id="2.1.2.9" evidence="1"/>
<dbReference type="EMBL" id="BX294155">
    <property type="protein sequence ID" value="CAD77821.1"/>
    <property type="molecule type" value="Genomic_DNA"/>
</dbReference>
<dbReference type="RefSeq" id="NP_870744.1">
    <property type="nucleotide sequence ID" value="NC_005027.1"/>
</dbReference>
<dbReference type="RefSeq" id="WP_011123937.1">
    <property type="nucleotide sequence ID" value="NC_005027.1"/>
</dbReference>
<dbReference type="SMR" id="Q7UHZ6"/>
<dbReference type="FunCoup" id="Q7UHZ6">
    <property type="interactions" value="501"/>
</dbReference>
<dbReference type="STRING" id="243090.RB12854"/>
<dbReference type="EnsemblBacteria" id="CAD77821">
    <property type="protein sequence ID" value="CAD77821"/>
    <property type="gene ID" value="RB12854"/>
</dbReference>
<dbReference type="KEGG" id="rba:RB12854"/>
<dbReference type="PATRIC" id="fig|243090.15.peg.6227"/>
<dbReference type="eggNOG" id="COG0223">
    <property type="taxonomic scope" value="Bacteria"/>
</dbReference>
<dbReference type="HOGENOM" id="CLU_033347_2_0_0"/>
<dbReference type="InParanoid" id="Q7UHZ6"/>
<dbReference type="OrthoDB" id="9802815at2"/>
<dbReference type="Proteomes" id="UP000001025">
    <property type="component" value="Chromosome"/>
</dbReference>
<dbReference type="GO" id="GO:0005829">
    <property type="term" value="C:cytosol"/>
    <property type="evidence" value="ECO:0000318"/>
    <property type="project" value="GO_Central"/>
</dbReference>
<dbReference type="GO" id="GO:0004479">
    <property type="term" value="F:methionyl-tRNA formyltransferase activity"/>
    <property type="evidence" value="ECO:0000318"/>
    <property type="project" value="GO_Central"/>
</dbReference>
<dbReference type="GO" id="GO:0071951">
    <property type="term" value="P:conversion of methionyl-tRNA to N-formyl-methionyl-tRNA"/>
    <property type="evidence" value="ECO:0000318"/>
    <property type="project" value="GO_Central"/>
</dbReference>
<dbReference type="CDD" id="cd08646">
    <property type="entry name" value="FMT_core_Met-tRNA-FMT_N"/>
    <property type="match status" value="1"/>
</dbReference>
<dbReference type="CDD" id="cd08704">
    <property type="entry name" value="Met_tRNA_FMT_C"/>
    <property type="match status" value="1"/>
</dbReference>
<dbReference type="Gene3D" id="3.40.50.12230">
    <property type="match status" value="1"/>
</dbReference>
<dbReference type="HAMAP" id="MF_00182">
    <property type="entry name" value="Formyl_trans"/>
    <property type="match status" value="1"/>
</dbReference>
<dbReference type="InterPro" id="IPR005794">
    <property type="entry name" value="Fmt"/>
</dbReference>
<dbReference type="InterPro" id="IPR005793">
    <property type="entry name" value="Formyl_trans_C"/>
</dbReference>
<dbReference type="InterPro" id="IPR002376">
    <property type="entry name" value="Formyl_transf_N"/>
</dbReference>
<dbReference type="InterPro" id="IPR036477">
    <property type="entry name" value="Formyl_transf_N_sf"/>
</dbReference>
<dbReference type="InterPro" id="IPR011034">
    <property type="entry name" value="Formyl_transferase-like_C_sf"/>
</dbReference>
<dbReference type="InterPro" id="IPR044135">
    <property type="entry name" value="Met-tRNA-FMT_C"/>
</dbReference>
<dbReference type="InterPro" id="IPR041711">
    <property type="entry name" value="Met-tRNA-FMT_N"/>
</dbReference>
<dbReference type="NCBIfam" id="TIGR00460">
    <property type="entry name" value="fmt"/>
    <property type="match status" value="1"/>
</dbReference>
<dbReference type="PANTHER" id="PTHR11138">
    <property type="entry name" value="METHIONYL-TRNA FORMYLTRANSFERASE"/>
    <property type="match status" value="1"/>
</dbReference>
<dbReference type="PANTHER" id="PTHR11138:SF5">
    <property type="entry name" value="METHIONYL-TRNA FORMYLTRANSFERASE, MITOCHONDRIAL"/>
    <property type="match status" value="1"/>
</dbReference>
<dbReference type="Pfam" id="PF02911">
    <property type="entry name" value="Formyl_trans_C"/>
    <property type="match status" value="1"/>
</dbReference>
<dbReference type="Pfam" id="PF00551">
    <property type="entry name" value="Formyl_trans_N"/>
    <property type="match status" value="1"/>
</dbReference>
<dbReference type="SUPFAM" id="SSF50486">
    <property type="entry name" value="FMT C-terminal domain-like"/>
    <property type="match status" value="1"/>
</dbReference>
<dbReference type="SUPFAM" id="SSF53328">
    <property type="entry name" value="Formyltransferase"/>
    <property type="match status" value="1"/>
</dbReference>
<sequence length="335" mass="36032">MEPRRMADSLRYVLMGTGPFAVPSFEAIRQQMDSTGDQIARVFVRPLPPVKSRGGPPPQPVREWAESHGLPVDAPASINDPETIASLTELNADLLVVCDYGQILKPDALQSARLGGINLHGSLLPAYRGAAPVQRALLSGDRETGVSVIHMTPRLDGGPIVASRTTPIRDDETSGELEVRLSEIGVDATREAIGLLRTIESLDSHGPLGEPQDPAKVSKAPRLSKAEAQIDWSATGREIDCLVRGMQPWPVAFTHTVVNENKPPLRVAIRGVRTETYAADASNIGRVMEHEGLAIGCGDGQVVIERLQPAGKKEMSGLDFKRGHRLTAGQQLIAP</sequence>